<sequence>MNNAKMWLVVKPTVGIPLFLVACAIASFLVHLMLVLTTGWMGDYYSGSFEAASLVSNATTLLS</sequence>
<feature type="chain" id="PRO_0000099805" description="Light-harvesting protein B-800/850 alpha chain">
    <location>
        <begin position="1"/>
        <end position="63"/>
    </location>
</feature>
<feature type="topological domain" description="Cytoplasmic" evidence="1">
    <location>
        <begin position="1"/>
        <end position="14"/>
    </location>
</feature>
<feature type="transmembrane region" description="Helical" evidence="1">
    <location>
        <begin position="15"/>
        <end position="35"/>
    </location>
</feature>
<feature type="topological domain" description="Periplasmic" evidence="1">
    <location>
        <begin position="36"/>
        <end position="63"/>
    </location>
</feature>
<feature type="binding site" description="axial binding residue" evidence="1">
    <location>
        <position position="31"/>
    </location>
    <ligand>
        <name>a bacteriochlorophyll</name>
        <dbReference type="ChEBI" id="CHEBI:38201"/>
    </ligand>
    <ligandPart>
        <name>Mg</name>
        <dbReference type="ChEBI" id="CHEBI:25107"/>
    </ligandPart>
</feature>
<reference key="1">
    <citation type="journal article" date="1997" name="Biochim. Biophys. Acta">
        <title>Gene cloning and regulation of gene expression of the puc operon from Rhodovulum sulfidophilum.</title>
        <authorList>
            <person name="Hagemann G.E."/>
            <person name="Katsiou E."/>
            <person name="Forkl H."/>
            <person name="Steindorf A.C."/>
            <person name="Tadros M.H."/>
        </authorList>
    </citation>
    <scope>NUCLEOTIDE SEQUENCE [GENOMIC DNA]</scope>
    <source>
        <strain>W4</strain>
    </source>
</reference>
<reference key="2">
    <citation type="journal article" date="1995" name="FEBS Lett.">
        <title>Isolation and complete amino acid sequence of the beta- and alpha-polypeptides from the peripheral light-harvesting pigment-protein complex II of Rhodobacter sulfidophilus.</title>
        <authorList>
            <person name="Tadros M.H."/>
            <person name="Hagemann G.E."/>
            <person name="Katsiou E."/>
            <person name="Dierstein R."/>
            <person name="Schiltz E."/>
        </authorList>
    </citation>
    <scope>PROTEIN SEQUENCE OF 1-52</scope>
    <source>
        <strain>W4</strain>
    </source>
</reference>
<accession>P95655</accession>
<protein>
    <recommendedName>
        <fullName>Light-harvesting protein B-800/850 alpha chain</fullName>
    </recommendedName>
    <alternativeName>
        <fullName>Antenna pigment protein alpha chain</fullName>
    </alternativeName>
    <alternativeName>
        <fullName>LH-2</fullName>
    </alternativeName>
</protein>
<comment type="function">
    <text>Antenna complexes are light-harvesting systems, which transfer the excitation energy to the reaction centers.</text>
</comment>
<comment type="subunit">
    <text>The core complex is formed by different alpha and beta chains, binding bacteriochlorophyll molecules, and arranged most probably in tetrameric structures disposed around the reaction center. The non-pigmented gamma chains may constitute additional components.</text>
</comment>
<comment type="subcellular location">
    <subcellularLocation>
        <location>Cell inner membrane</location>
        <topology>Single-pass type II membrane protein</topology>
    </subcellularLocation>
</comment>
<comment type="similarity">
    <text evidence="2">Belongs to the antenna complex alpha subunit family.</text>
</comment>
<evidence type="ECO:0000255" key="1"/>
<evidence type="ECO:0000305" key="2"/>
<dbReference type="EMBL" id="U81968">
    <property type="protein sequence ID" value="AAB59007.1"/>
    <property type="molecule type" value="Genomic_DNA"/>
</dbReference>
<dbReference type="PIR" id="S66225">
    <property type="entry name" value="S66225"/>
</dbReference>
<dbReference type="RefSeq" id="WP_042460744.1">
    <property type="nucleotide sequence ID" value="NZ_NHRZ01000044.1"/>
</dbReference>
<dbReference type="SMR" id="P95655"/>
<dbReference type="STRING" id="35806.A6024_09295"/>
<dbReference type="eggNOG" id="ENOG503358U">
    <property type="taxonomic scope" value="Bacteria"/>
</dbReference>
<dbReference type="OrthoDB" id="7065223at2"/>
<dbReference type="GO" id="GO:0005886">
    <property type="term" value="C:plasma membrane"/>
    <property type="evidence" value="ECO:0007669"/>
    <property type="project" value="UniProtKB-SubCell"/>
</dbReference>
<dbReference type="GO" id="GO:0030077">
    <property type="term" value="C:plasma membrane light-harvesting complex"/>
    <property type="evidence" value="ECO:0007669"/>
    <property type="project" value="InterPro"/>
</dbReference>
<dbReference type="GO" id="GO:0042314">
    <property type="term" value="F:bacteriochlorophyll binding"/>
    <property type="evidence" value="ECO:0007669"/>
    <property type="project" value="UniProtKB-KW"/>
</dbReference>
<dbReference type="GO" id="GO:0045156">
    <property type="term" value="F:electron transporter, transferring electrons within the cyclic electron transport pathway of photosynthesis activity"/>
    <property type="evidence" value="ECO:0007669"/>
    <property type="project" value="InterPro"/>
</dbReference>
<dbReference type="GO" id="GO:0046872">
    <property type="term" value="F:metal ion binding"/>
    <property type="evidence" value="ECO:0007669"/>
    <property type="project" value="UniProtKB-KW"/>
</dbReference>
<dbReference type="GO" id="GO:0019684">
    <property type="term" value="P:photosynthesis, light reaction"/>
    <property type="evidence" value="ECO:0007669"/>
    <property type="project" value="InterPro"/>
</dbReference>
<dbReference type="Gene3D" id="4.10.220.20">
    <property type="entry name" value="Light-harvesting complex"/>
    <property type="match status" value="1"/>
</dbReference>
<dbReference type="InterPro" id="IPR000066">
    <property type="entry name" value="Antenna_a/b"/>
</dbReference>
<dbReference type="InterPro" id="IPR018332">
    <property type="entry name" value="Antenna_alpha"/>
</dbReference>
<dbReference type="InterPro" id="IPR035889">
    <property type="entry name" value="Light-harvesting_complex"/>
</dbReference>
<dbReference type="Pfam" id="PF00556">
    <property type="entry name" value="LHC"/>
    <property type="match status" value="1"/>
</dbReference>
<dbReference type="PRINTS" id="PR00673">
    <property type="entry name" value="LIGHTHARVSTA"/>
</dbReference>
<dbReference type="SUPFAM" id="SSF56918">
    <property type="entry name" value="Light-harvesting complex subunits"/>
    <property type="match status" value="1"/>
</dbReference>
<name>LHA2_RHOSU</name>
<proteinExistence type="evidence at protein level"/>
<keyword id="KW-0042">Antenna complex</keyword>
<keyword id="KW-0076">Bacteriochlorophyll</keyword>
<keyword id="KW-0997">Cell inner membrane</keyword>
<keyword id="KW-1003">Cell membrane</keyword>
<keyword id="KW-0148">Chlorophyll</keyword>
<keyword id="KW-0157">Chromophore</keyword>
<keyword id="KW-0903">Direct protein sequencing</keyword>
<keyword id="KW-0437">Light-harvesting polypeptide</keyword>
<keyword id="KW-0460">Magnesium</keyword>
<keyword id="KW-0472">Membrane</keyword>
<keyword id="KW-0479">Metal-binding</keyword>
<keyword id="KW-0812">Transmembrane</keyword>
<keyword id="KW-1133">Transmembrane helix</keyword>
<gene>
    <name type="primary">pucA</name>
</gene>
<organism>
    <name type="scientific">Rhodovulum sulfidophilum</name>
    <name type="common">Rhodobacter sulfidophilus</name>
    <dbReference type="NCBI Taxonomy" id="35806"/>
    <lineage>
        <taxon>Bacteria</taxon>
        <taxon>Pseudomonadati</taxon>
        <taxon>Pseudomonadota</taxon>
        <taxon>Alphaproteobacteria</taxon>
        <taxon>Rhodobacterales</taxon>
        <taxon>Paracoccaceae</taxon>
        <taxon>Rhodovulum</taxon>
    </lineage>
</organism>